<reference key="1">
    <citation type="submission" date="2008-02" db="EMBL/GenBank/DDBJ databases">
        <title>Complete sequence of chromosome of Methylobacterium sp. 4-46.</title>
        <authorList>
            <consortium name="US DOE Joint Genome Institute"/>
            <person name="Copeland A."/>
            <person name="Lucas S."/>
            <person name="Lapidus A."/>
            <person name="Glavina del Rio T."/>
            <person name="Dalin E."/>
            <person name="Tice H."/>
            <person name="Bruce D."/>
            <person name="Goodwin L."/>
            <person name="Pitluck S."/>
            <person name="Chertkov O."/>
            <person name="Brettin T."/>
            <person name="Detter J.C."/>
            <person name="Han C."/>
            <person name="Kuske C.R."/>
            <person name="Schmutz J."/>
            <person name="Larimer F."/>
            <person name="Land M."/>
            <person name="Hauser L."/>
            <person name="Kyrpides N."/>
            <person name="Ivanova N."/>
            <person name="Marx C.J."/>
            <person name="Richardson P."/>
        </authorList>
    </citation>
    <scope>NUCLEOTIDE SEQUENCE [LARGE SCALE GENOMIC DNA]</scope>
    <source>
        <strain>4-46</strain>
    </source>
</reference>
<accession>B0U7H1</accession>
<organism>
    <name type="scientific">Methylobacterium sp. (strain 4-46)</name>
    <dbReference type="NCBI Taxonomy" id="426117"/>
    <lineage>
        <taxon>Bacteria</taxon>
        <taxon>Pseudomonadati</taxon>
        <taxon>Pseudomonadota</taxon>
        <taxon>Alphaproteobacteria</taxon>
        <taxon>Hyphomicrobiales</taxon>
        <taxon>Methylobacteriaceae</taxon>
        <taxon>Methylobacterium</taxon>
    </lineage>
</organism>
<comment type="function">
    <text evidence="1">Required for rescue of stalled ribosomes mediated by trans-translation. Binds to transfer-messenger RNA (tmRNA), required for stable association of tmRNA with ribosomes. tmRNA and SmpB together mimic tRNA shape, replacing the anticodon stem-loop with SmpB. tmRNA is encoded by the ssrA gene; the 2 termini fold to resemble tRNA(Ala) and it encodes a 'tag peptide', a short internal open reading frame. During trans-translation Ala-aminoacylated tmRNA acts like a tRNA, entering the A-site of stalled ribosomes, displacing the stalled mRNA. The ribosome then switches to translate the ORF on the tmRNA; the nascent peptide is terminated with the 'tag peptide' encoded by the tmRNA and targeted for degradation. The ribosome is freed to recommence translation, which seems to be the essential function of trans-translation.</text>
</comment>
<comment type="subcellular location">
    <subcellularLocation>
        <location evidence="1">Cytoplasm</location>
    </subcellularLocation>
    <text evidence="1">The tmRNA-SmpB complex associates with stalled 70S ribosomes.</text>
</comment>
<comment type="similarity">
    <text evidence="1">Belongs to the SmpB family.</text>
</comment>
<name>SSRP_METS4</name>
<dbReference type="EMBL" id="CP000943">
    <property type="protein sequence ID" value="ACA15256.1"/>
    <property type="molecule type" value="Genomic_DNA"/>
</dbReference>
<dbReference type="RefSeq" id="WP_012330673.1">
    <property type="nucleotide sequence ID" value="NC_010511.1"/>
</dbReference>
<dbReference type="SMR" id="B0U7H1"/>
<dbReference type="STRING" id="426117.M446_0696"/>
<dbReference type="KEGG" id="met:M446_0696"/>
<dbReference type="eggNOG" id="COG0691">
    <property type="taxonomic scope" value="Bacteria"/>
</dbReference>
<dbReference type="HOGENOM" id="CLU_108953_0_1_5"/>
<dbReference type="GO" id="GO:0005829">
    <property type="term" value="C:cytosol"/>
    <property type="evidence" value="ECO:0007669"/>
    <property type="project" value="TreeGrafter"/>
</dbReference>
<dbReference type="GO" id="GO:0003723">
    <property type="term" value="F:RNA binding"/>
    <property type="evidence" value="ECO:0007669"/>
    <property type="project" value="UniProtKB-UniRule"/>
</dbReference>
<dbReference type="GO" id="GO:0070929">
    <property type="term" value="P:trans-translation"/>
    <property type="evidence" value="ECO:0007669"/>
    <property type="project" value="UniProtKB-UniRule"/>
</dbReference>
<dbReference type="CDD" id="cd09294">
    <property type="entry name" value="SmpB"/>
    <property type="match status" value="1"/>
</dbReference>
<dbReference type="Gene3D" id="2.40.280.10">
    <property type="match status" value="1"/>
</dbReference>
<dbReference type="HAMAP" id="MF_00023">
    <property type="entry name" value="SmpB"/>
    <property type="match status" value="1"/>
</dbReference>
<dbReference type="InterPro" id="IPR023620">
    <property type="entry name" value="SmpB"/>
</dbReference>
<dbReference type="InterPro" id="IPR000037">
    <property type="entry name" value="SsrA-bd_prot"/>
</dbReference>
<dbReference type="InterPro" id="IPR020081">
    <property type="entry name" value="SsrA-bd_prot_CS"/>
</dbReference>
<dbReference type="NCBIfam" id="NF003843">
    <property type="entry name" value="PRK05422.1"/>
    <property type="match status" value="1"/>
</dbReference>
<dbReference type="NCBIfam" id="TIGR00086">
    <property type="entry name" value="smpB"/>
    <property type="match status" value="1"/>
</dbReference>
<dbReference type="PANTHER" id="PTHR30308:SF2">
    <property type="entry name" value="SSRA-BINDING PROTEIN"/>
    <property type="match status" value="1"/>
</dbReference>
<dbReference type="PANTHER" id="PTHR30308">
    <property type="entry name" value="TMRNA-BINDING COMPONENT OF TRANS-TRANSLATION TAGGING COMPLEX"/>
    <property type="match status" value="1"/>
</dbReference>
<dbReference type="Pfam" id="PF01668">
    <property type="entry name" value="SmpB"/>
    <property type="match status" value="1"/>
</dbReference>
<dbReference type="SUPFAM" id="SSF74982">
    <property type="entry name" value="Small protein B (SmpB)"/>
    <property type="match status" value="1"/>
</dbReference>
<dbReference type="PROSITE" id="PS01317">
    <property type="entry name" value="SSRP"/>
    <property type="match status" value="1"/>
</dbReference>
<gene>
    <name evidence="1" type="primary">smpB</name>
    <name type="ordered locus">M446_0696</name>
</gene>
<sequence>MAPKADPARRVVADNRKARFHYEITDTVEAGIALTGTEVKSLRGGKATIGEAYAGPSGDEFFLFNAYIPEYLEANRFNHETKRPRRLLLHRRQINKFLGATQREGYTVIPLKIYFNERGRAKVELGLGRGKKLHDKRETAKERDWQRDKARLMRDKG</sequence>
<evidence type="ECO:0000255" key="1">
    <source>
        <dbReference type="HAMAP-Rule" id="MF_00023"/>
    </source>
</evidence>
<evidence type="ECO:0000256" key="2">
    <source>
        <dbReference type="SAM" id="MobiDB-lite"/>
    </source>
</evidence>
<feature type="chain" id="PRO_1000090165" description="SsrA-binding protein">
    <location>
        <begin position="1"/>
        <end position="157"/>
    </location>
</feature>
<feature type="region of interest" description="Disordered" evidence="2">
    <location>
        <begin position="133"/>
        <end position="157"/>
    </location>
</feature>
<feature type="compositionally biased region" description="Basic and acidic residues" evidence="2">
    <location>
        <begin position="135"/>
        <end position="157"/>
    </location>
</feature>
<proteinExistence type="inferred from homology"/>
<protein>
    <recommendedName>
        <fullName evidence="1">SsrA-binding protein</fullName>
    </recommendedName>
    <alternativeName>
        <fullName evidence="1">Small protein B</fullName>
    </alternativeName>
</protein>
<keyword id="KW-0963">Cytoplasm</keyword>
<keyword id="KW-0694">RNA-binding</keyword>